<keyword id="KW-0113">Calvin cycle</keyword>
<keyword id="KW-0120">Carbon dioxide fixation</keyword>
<keyword id="KW-0150">Chloroplast</keyword>
<keyword id="KW-0456">Lyase</keyword>
<keyword id="KW-0460">Magnesium</keyword>
<keyword id="KW-0479">Metal-binding</keyword>
<keyword id="KW-0488">Methylation</keyword>
<keyword id="KW-0503">Monooxygenase</keyword>
<keyword id="KW-0560">Oxidoreductase</keyword>
<keyword id="KW-0601">Photorespiration</keyword>
<keyword id="KW-0602">Photosynthesis</keyword>
<keyword id="KW-0934">Plastid</keyword>
<geneLocation type="chloroplast"/>
<dbReference type="EC" id="4.1.1.39" evidence="1"/>
<dbReference type="EMBL" id="Z70160">
    <property type="protein sequence ID" value="CAA94018.1"/>
    <property type="molecule type" value="Genomic_DNA"/>
</dbReference>
<dbReference type="SMR" id="P93869"/>
<dbReference type="GO" id="GO:0009507">
    <property type="term" value="C:chloroplast"/>
    <property type="evidence" value="ECO:0007669"/>
    <property type="project" value="UniProtKB-SubCell"/>
</dbReference>
<dbReference type="GO" id="GO:0000287">
    <property type="term" value="F:magnesium ion binding"/>
    <property type="evidence" value="ECO:0007669"/>
    <property type="project" value="InterPro"/>
</dbReference>
<dbReference type="GO" id="GO:0004497">
    <property type="term" value="F:monooxygenase activity"/>
    <property type="evidence" value="ECO:0007669"/>
    <property type="project" value="UniProtKB-KW"/>
</dbReference>
<dbReference type="GO" id="GO:0016984">
    <property type="term" value="F:ribulose-bisphosphate carboxylase activity"/>
    <property type="evidence" value="ECO:0007669"/>
    <property type="project" value="UniProtKB-EC"/>
</dbReference>
<dbReference type="GO" id="GO:0009853">
    <property type="term" value="P:photorespiration"/>
    <property type="evidence" value="ECO:0007669"/>
    <property type="project" value="UniProtKB-KW"/>
</dbReference>
<dbReference type="GO" id="GO:0019253">
    <property type="term" value="P:reductive pentose-phosphate cycle"/>
    <property type="evidence" value="ECO:0007669"/>
    <property type="project" value="UniProtKB-KW"/>
</dbReference>
<dbReference type="CDD" id="cd08212">
    <property type="entry name" value="RuBisCO_large_I"/>
    <property type="match status" value="1"/>
</dbReference>
<dbReference type="FunFam" id="3.20.20.110:FF:000001">
    <property type="entry name" value="Ribulose bisphosphate carboxylase large chain"/>
    <property type="match status" value="1"/>
</dbReference>
<dbReference type="FunFam" id="3.30.70.150:FF:000001">
    <property type="entry name" value="Ribulose bisphosphate carboxylase large chain"/>
    <property type="match status" value="1"/>
</dbReference>
<dbReference type="Gene3D" id="3.20.20.110">
    <property type="entry name" value="Ribulose bisphosphate carboxylase, large subunit, C-terminal domain"/>
    <property type="match status" value="1"/>
</dbReference>
<dbReference type="Gene3D" id="3.30.70.150">
    <property type="entry name" value="RuBisCO large subunit, N-terminal domain"/>
    <property type="match status" value="1"/>
</dbReference>
<dbReference type="HAMAP" id="MF_01338">
    <property type="entry name" value="RuBisCO_L_type1"/>
    <property type="match status" value="1"/>
</dbReference>
<dbReference type="InterPro" id="IPR033966">
    <property type="entry name" value="RuBisCO"/>
</dbReference>
<dbReference type="InterPro" id="IPR020878">
    <property type="entry name" value="RuBisCo_large_chain_AS"/>
</dbReference>
<dbReference type="InterPro" id="IPR000685">
    <property type="entry name" value="RuBisCO_lsu_C"/>
</dbReference>
<dbReference type="InterPro" id="IPR036376">
    <property type="entry name" value="RuBisCO_lsu_C_sf"/>
</dbReference>
<dbReference type="InterPro" id="IPR017443">
    <property type="entry name" value="RuBisCO_lsu_fd_N"/>
</dbReference>
<dbReference type="InterPro" id="IPR036422">
    <property type="entry name" value="RuBisCO_lsu_N_sf"/>
</dbReference>
<dbReference type="InterPro" id="IPR020888">
    <property type="entry name" value="RuBisCO_lsuI"/>
</dbReference>
<dbReference type="NCBIfam" id="NF003252">
    <property type="entry name" value="PRK04208.1"/>
    <property type="match status" value="1"/>
</dbReference>
<dbReference type="PANTHER" id="PTHR42704">
    <property type="entry name" value="RIBULOSE BISPHOSPHATE CARBOXYLASE"/>
    <property type="match status" value="1"/>
</dbReference>
<dbReference type="PANTHER" id="PTHR42704:SF15">
    <property type="entry name" value="RIBULOSE BISPHOSPHATE CARBOXYLASE LARGE CHAIN"/>
    <property type="match status" value="1"/>
</dbReference>
<dbReference type="Pfam" id="PF00016">
    <property type="entry name" value="RuBisCO_large"/>
    <property type="match status" value="1"/>
</dbReference>
<dbReference type="Pfam" id="PF02788">
    <property type="entry name" value="RuBisCO_large_N"/>
    <property type="match status" value="1"/>
</dbReference>
<dbReference type="SFLD" id="SFLDG01052">
    <property type="entry name" value="RuBisCO"/>
    <property type="match status" value="1"/>
</dbReference>
<dbReference type="SFLD" id="SFLDS00014">
    <property type="entry name" value="RuBisCO"/>
    <property type="match status" value="1"/>
</dbReference>
<dbReference type="SFLD" id="SFLDG00301">
    <property type="entry name" value="RuBisCO-like_proteins"/>
    <property type="match status" value="1"/>
</dbReference>
<dbReference type="SUPFAM" id="SSF51649">
    <property type="entry name" value="RuBisCo, C-terminal domain"/>
    <property type="match status" value="1"/>
</dbReference>
<dbReference type="SUPFAM" id="SSF54966">
    <property type="entry name" value="RuBisCO, large subunit, small (N-terminal) domain"/>
    <property type="match status" value="1"/>
</dbReference>
<dbReference type="PROSITE" id="PS00157">
    <property type="entry name" value="RUBISCO_LARGE"/>
    <property type="match status" value="1"/>
</dbReference>
<organism>
    <name type="scientific">Tamarindus indica</name>
    <name type="common">Tamarind</name>
    <dbReference type="NCBI Taxonomy" id="58860"/>
    <lineage>
        <taxon>Eukaryota</taxon>
        <taxon>Viridiplantae</taxon>
        <taxon>Streptophyta</taxon>
        <taxon>Embryophyta</taxon>
        <taxon>Tracheophyta</taxon>
        <taxon>Spermatophyta</taxon>
        <taxon>Magnoliopsida</taxon>
        <taxon>eudicotyledons</taxon>
        <taxon>Gunneridae</taxon>
        <taxon>Pentapetalae</taxon>
        <taxon>rosids</taxon>
        <taxon>fabids</taxon>
        <taxon>Fabales</taxon>
        <taxon>Fabaceae</taxon>
        <taxon>Detarioideae</taxon>
        <taxon>Amherstieae</taxon>
        <taxon>Tamarindus</taxon>
    </lineage>
</organism>
<gene>
    <name evidence="1" type="primary">rbcL</name>
</gene>
<sequence>SVGFKAGVKDYKLTYYTPDYETKDTDILAAFRVTPQPGVPPEEAGAEVAAESSTGTWTTVWTDGLTSLDRYKGRCYHIEPVAGEENQYIAYVAYPLDLFEEGSVTNMFTSIVGNVFGFKALRALRLEDLRIPTAYTKTFQGPPHGIQVERDKLNKYGRPLLGCTIKPKLGLSAKNYGRAVYECLRGGLDFTKDDENVNSQPFMRWRDRFLFCAEAIYKAQAETGEIKGHYLNATAGTWEEMIKRAVFARELGVPIVMHDYLTGGFTANTSLAHYCRDNGLLLHIHRAMHAVIDRQKNHGMHFRVLAKALRLSGGDHIHAGTVVGKLEGEREITLGFVDLLRDDFIEKDRSRGIYFTQDWVSLPGVLPVASGGIHVWHMPALTEIFGDDSVLQFGGGTLGHPWGNAPGAVANRVALEACVQARNEGRDLAREGNEIIREASKWSPELAAACEVWKE</sequence>
<name>RBL_TAMIN</name>
<reference key="1">
    <citation type="thesis" date="1995" institute="Universitaet Heidelberg" country="Germany">
        <authorList>
            <person name="Kaess E."/>
        </authorList>
    </citation>
    <scope>NUCLEOTIDE SEQUENCE [GENOMIC DNA]</scope>
    <source>
        <tissue>Leaf</tissue>
    </source>
</reference>
<accession>P93869</accession>
<feature type="chain" id="PRO_0000062601" description="Ribulose bisphosphate carboxylase large chain">
    <location>
        <begin position="1" status="less than"/>
        <end position="455" status="greater than"/>
    </location>
</feature>
<feature type="active site" description="Proton acceptor" evidence="1">
    <location>
        <position position="166"/>
    </location>
</feature>
<feature type="active site" description="Proton acceptor" evidence="1">
    <location>
        <position position="285"/>
    </location>
</feature>
<feature type="binding site" description="in homodimeric partner" evidence="1">
    <location>
        <position position="114"/>
    </location>
    <ligand>
        <name>substrate</name>
    </ligand>
</feature>
<feature type="binding site" evidence="1">
    <location>
        <position position="164"/>
    </location>
    <ligand>
        <name>substrate</name>
    </ligand>
</feature>
<feature type="binding site" evidence="1">
    <location>
        <position position="168"/>
    </location>
    <ligand>
        <name>substrate</name>
    </ligand>
</feature>
<feature type="binding site" description="via carbamate group" evidence="1">
    <location>
        <position position="192"/>
    </location>
    <ligand>
        <name>Mg(2+)</name>
        <dbReference type="ChEBI" id="CHEBI:18420"/>
    </ligand>
</feature>
<feature type="binding site" evidence="1">
    <location>
        <position position="194"/>
    </location>
    <ligand>
        <name>Mg(2+)</name>
        <dbReference type="ChEBI" id="CHEBI:18420"/>
    </ligand>
</feature>
<feature type="binding site" evidence="1">
    <location>
        <position position="195"/>
    </location>
    <ligand>
        <name>Mg(2+)</name>
        <dbReference type="ChEBI" id="CHEBI:18420"/>
    </ligand>
</feature>
<feature type="binding site" evidence="1">
    <location>
        <position position="286"/>
    </location>
    <ligand>
        <name>substrate</name>
    </ligand>
</feature>
<feature type="binding site" evidence="1">
    <location>
        <position position="318"/>
    </location>
    <ligand>
        <name>substrate</name>
    </ligand>
</feature>
<feature type="binding site" evidence="1">
    <location>
        <position position="370"/>
    </location>
    <ligand>
        <name>substrate</name>
    </ligand>
</feature>
<feature type="site" description="Transition state stabilizer" evidence="1">
    <location>
        <position position="325"/>
    </location>
</feature>
<feature type="modified residue" description="N6,N6,N6-trimethyllysine" evidence="1">
    <location>
        <position position="5"/>
    </location>
</feature>
<feature type="modified residue" description="N6-carboxylysine" evidence="1">
    <location>
        <position position="192"/>
    </location>
</feature>
<feature type="non-terminal residue">
    <location>
        <position position="1"/>
    </location>
</feature>
<feature type="non-terminal residue">
    <location>
        <position position="455"/>
    </location>
</feature>
<proteinExistence type="inferred from homology"/>
<protein>
    <recommendedName>
        <fullName evidence="1">Ribulose bisphosphate carboxylase large chain</fullName>
        <shortName evidence="1">RuBisCO large subunit</shortName>
        <ecNumber evidence="1">4.1.1.39</ecNumber>
    </recommendedName>
</protein>
<comment type="function">
    <text evidence="1">RuBisCO catalyzes two reactions: the carboxylation of D-ribulose 1,5-bisphosphate, the primary event in carbon dioxide fixation, as well as the oxidative fragmentation of the pentose substrate in the photorespiration process. Both reactions occur simultaneously and in competition at the same active site.</text>
</comment>
<comment type="catalytic activity">
    <reaction evidence="1">
        <text>2 (2R)-3-phosphoglycerate + 2 H(+) = D-ribulose 1,5-bisphosphate + CO2 + H2O</text>
        <dbReference type="Rhea" id="RHEA:23124"/>
        <dbReference type="ChEBI" id="CHEBI:15377"/>
        <dbReference type="ChEBI" id="CHEBI:15378"/>
        <dbReference type="ChEBI" id="CHEBI:16526"/>
        <dbReference type="ChEBI" id="CHEBI:57870"/>
        <dbReference type="ChEBI" id="CHEBI:58272"/>
        <dbReference type="EC" id="4.1.1.39"/>
    </reaction>
</comment>
<comment type="catalytic activity">
    <reaction evidence="1">
        <text>D-ribulose 1,5-bisphosphate + O2 = 2-phosphoglycolate + (2R)-3-phosphoglycerate + 2 H(+)</text>
        <dbReference type="Rhea" id="RHEA:36631"/>
        <dbReference type="ChEBI" id="CHEBI:15378"/>
        <dbReference type="ChEBI" id="CHEBI:15379"/>
        <dbReference type="ChEBI" id="CHEBI:57870"/>
        <dbReference type="ChEBI" id="CHEBI:58033"/>
        <dbReference type="ChEBI" id="CHEBI:58272"/>
    </reaction>
</comment>
<comment type="cofactor">
    <cofactor evidence="1">
        <name>Mg(2+)</name>
        <dbReference type="ChEBI" id="CHEBI:18420"/>
    </cofactor>
    <text evidence="1">Binds 1 Mg(2+) ion per subunit.</text>
</comment>
<comment type="subunit">
    <text evidence="1">Heterohexadecamer of 8 large chains and 8 small chains.</text>
</comment>
<comment type="subcellular location">
    <subcellularLocation>
        <location>Plastid</location>
        <location>Chloroplast</location>
    </subcellularLocation>
</comment>
<comment type="miscellaneous">
    <text evidence="1">The basic functional RuBisCO is composed of a large chain homodimer in a 'head-to-tail' conformation. In form I RuBisCO this homodimer is arranged in a barrel-like tetramer with the small subunits forming a tetrameric 'cap' on each end of the 'barrel'.</text>
</comment>
<comment type="similarity">
    <text evidence="1">Belongs to the RuBisCO large chain family. Type I subfamily.</text>
</comment>
<evidence type="ECO:0000255" key="1">
    <source>
        <dbReference type="HAMAP-Rule" id="MF_01338"/>
    </source>
</evidence>